<organism>
    <name type="scientific">Zea mays</name>
    <name type="common">Maize</name>
    <dbReference type="NCBI Taxonomy" id="4577"/>
    <lineage>
        <taxon>Eukaryota</taxon>
        <taxon>Viridiplantae</taxon>
        <taxon>Streptophyta</taxon>
        <taxon>Embryophyta</taxon>
        <taxon>Tracheophyta</taxon>
        <taxon>Spermatophyta</taxon>
        <taxon>Magnoliopsida</taxon>
        <taxon>Liliopsida</taxon>
        <taxon>Poales</taxon>
        <taxon>Poaceae</taxon>
        <taxon>PACMAD clade</taxon>
        <taxon>Panicoideae</taxon>
        <taxon>Andropogonodae</taxon>
        <taxon>Andropogoneae</taxon>
        <taxon>Tripsacinae</taxon>
        <taxon>Zea</taxon>
    </lineage>
</organism>
<feature type="transit peptide" description="Chloroplast" evidence="1">
    <location>
        <begin position="1"/>
        <end position="51"/>
    </location>
</feature>
<feature type="chain" id="PRO_0000011179" description="Glutamine synthetase, chloroplastic">
    <location>
        <begin position="52"/>
        <end position="423"/>
    </location>
</feature>
<feature type="domain" description="GS beta-grasp" evidence="2">
    <location>
        <begin position="70"/>
        <end position="150"/>
    </location>
</feature>
<feature type="domain" description="GS catalytic" evidence="3">
    <location>
        <begin position="154"/>
        <end position="423"/>
    </location>
</feature>
<feature type="region of interest" description="Disordered" evidence="4">
    <location>
        <begin position="89"/>
        <end position="115"/>
    </location>
</feature>
<reference key="1">
    <citation type="journal article" date="1988" name="Genetics">
        <title>Maize glutamine synthetase cDNAs: isolation by direct genetic selection in Escherichia coli.</title>
        <authorList>
            <person name="Snustad D.P."/>
            <person name="Hunsperger J.P."/>
            <person name="Chereskin B.M."/>
            <person name="Messing J."/>
        </authorList>
    </citation>
    <scope>NUCLEOTIDE SEQUENCE [MRNA]</scope>
    <source>
        <strain>cv. Black Mexican Sweet</strain>
        <tissue>Leaf</tissue>
    </source>
</reference>
<reference key="2">
    <citation type="unpublished observations" date="1992-05">
        <authorList>
            <person name="Patthey J.-P."/>
        </authorList>
    </citation>
    <scope>POSSIBLE FRAMESHIFT ERROR IN SEQUENCE DESCRIBED IN PUBMED:2906306</scope>
</reference>
<reference key="3">
    <citation type="journal article" date="1993" name="Plant Mol. Biol.">
        <title>Differential expression of six glutamine synthetase genes in Zea mays.</title>
        <authorList>
            <person name="Li M.-G."/>
            <person name="Villemur R."/>
            <person name="Hussey P.J."/>
            <person name="Silflow C.D."/>
            <person name="Gantt J.S."/>
            <person name="Snustad D.P."/>
        </authorList>
    </citation>
    <scope>NUCLEOTIDE SEQUENCE [MRNA]</scope>
    <source>
        <strain>cv. Black Mexican Sweet</strain>
        <tissue>Seedling</tissue>
    </source>
</reference>
<proteinExistence type="evidence at transcript level"/>
<protein>
    <recommendedName>
        <fullName>Glutamine synthetase, chloroplastic</fullName>
        <ecNumber>6.3.1.2</ecNumber>
    </recommendedName>
    <alternativeName>
        <fullName>GS2</fullName>
    </alternativeName>
    <alternativeName>
        <fullName>Glutamate--ammonia ligase</fullName>
    </alternativeName>
</protein>
<dbReference type="EC" id="6.3.1.2"/>
<dbReference type="EMBL" id="X65931">
    <property type="protein sequence ID" value="CAA46724.1"/>
    <property type="molecule type" value="mRNA"/>
</dbReference>
<dbReference type="PIR" id="S39482">
    <property type="entry name" value="S39482"/>
</dbReference>
<dbReference type="RefSeq" id="NP_001105725.1">
    <property type="nucleotide sequence ID" value="NM_001112255.1"/>
</dbReference>
<dbReference type="SMR" id="P25462"/>
<dbReference type="FunCoup" id="P25462">
    <property type="interactions" value="3224"/>
</dbReference>
<dbReference type="STRING" id="4577.P25462"/>
<dbReference type="BindingDB" id="P25462"/>
<dbReference type="ChEMBL" id="CHEMBL2285357"/>
<dbReference type="PaxDb" id="4577-GRMZM2G098290_P02"/>
<dbReference type="MaizeGDB" id="61728"/>
<dbReference type="eggNOG" id="KOG0683">
    <property type="taxonomic scope" value="Eukaryota"/>
</dbReference>
<dbReference type="InParanoid" id="P25462"/>
<dbReference type="BRENDA" id="6.3.1.2">
    <property type="organism ID" value="6752"/>
</dbReference>
<dbReference type="PRO" id="PR:P25462"/>
<dbReference type="Proteomes" id="UP000007305">
    <property type="component" value="Unplaced"/>
</dbReference>
<dbReference type="ExpressionAtlas" id="P25462">
    <property type="expression patterns" value="baseline and differential"/>
</dbReference>
<dbReference type="GO" id="GO:0009507">
    <property type="term" value="C:chloroplast"/>
    <property type="evidence" value="ECO:0007669"/>
    <property type="project" value="UniProtKB-SubCell"/>
</dbReference>
<dbReference type="GO" id="GO:0005524">
    <property type="term" value="F:ATP binding"/>
    <property type="evidence" value="ECO:0007669"/>
    <property type="project" value="UniProtKB-KW"/>
</dbReference>
<dbReference type="GO" id="GO:0004356">
    <property type="term" value="F:glutamine synthetase activity"/>
    <property type="evidence" value="ECO:0007669"/>
    <property type="project" value="UniProtKB-EC"/>
</dbReference>
<dbReference type="GO" id="GO:0006542">
    <property type="term" value="P:glutamine biosynthetic process"/>
    <property type="evidence" value="ECO:0007669"/>
    <property type="project" value="InterPro"/>
</dbReference>
<dbReference type="FunFam" id="3.30.590.10:FF:000004">
    <property type="entry name" value="Glutamine synthetase"/>
    <property type="match status" value="1"/>
</dbReference>
<dbReference type="FunFam" id="3.10.20.70:FF:000003">
    <property type="entry name" value="Glutamine synthetase, chloroplastic"/>
    <property type="match status" value="1"/>
</dbReference>
<dbReference type="Gene3D" id="3.10.20.70">
    <property type="entry name" value="Glutamine synthetase, N-terminal domain"/>
    <property type="match status" value="1"/>
</dbReference>
<dbReference type="Gene3D" id="3.30.590.10">
    <property type="entry name" value="Glutamine synthetase/guanido kinase, catalytic domain"/>
    <property type="match status" value="1"/>
</dbReference>
<dbReference type="InterPro" id="IPR008147">
    <property type="entry name" value="Gln_synt_N"/>
</dbReference>
<dbReference type="InterPro" id="IPR036651">
    <property type="entry name" value="Gln_synt_N_sf"/>
</dbReference>
<dbReference type="InterPro" id="IPR014746">
    <property type="entry name" value="Gln_synth/guanido_kin_cat_dom"/>
</dbReference>
<dbReference type="InterPro" id="IPR008146">
    <property type="entry name" value="Gln_synth_cat_dom"/>
</dbReference>
<dbReference type="InterPro" id="IPR027303">
    <property type="entry name" value="Gln_synth_gly_rich_site"/>
</dbReference>
<dbReference type="InterPro" id="IPR027302">
    <property type="entry name" value="Gln_synth_N_conserv_site"/>
</dbReference>
<dbReference type="InterPro" id="IPR050292">
    <property type="entry name" value="Glutamine_Synthetase"/>
</dbReference>
<dbReference type="PANTHER" id="PTHR20852">
    <property type="entry name" value="GLUTAMINE SYNTHETASE"/>
    <property type="match status" value="1"/>
</dbReference>
<dbReference type="PANTHER" id="PTHR20852:SF118">
    <property type="entry name" value="GLUTAMINE SYNTHETASE, CHLOROPLASTIC_MITOCHONDRIAL"/>
    <property type="match status" value="1"/>
</dbReference>
<dbReference type="Pfam" id="PF00120">
    <property type="entry name" value="Gln-synt_C"/>
    <property type="match status" value="1"/>
</dbReference>
<dbReference type="Pfam" id="PF03951">
    <property type="entry name" value="Gln-synt_N"/>
    <property type="match status" value="1"/>
</dbReference>
<dbReference type="SMART" id="SM01230">
    <property type="entry name" value="Gln-synt_C"/>
    <property type="match status" value="1"/>
</dbReference>
<dbReference type="SUPFAM" id="SSF54368">
    <property type="entry name" value="Glutamine synthetase, N-terminal domain"/>
    <property type="match status" value="1"/>
</dbReference>
<dbReference type="SUPFAM" id="SSF55931">
    <property type="entry name" value="Glutamine synthetase/guanido kinase"/>
    <property type="match status" value="1"/>
</dbReference>
<dbReference type="PROSITE" id="PS00180">
    <property type="entry name" value="GLNA_1"/>
    <property type="match status" value="1"/>
</dbReference>
<dbReference type="PROSITE" id="PS00181">
    <property type="entry name" value="GLNA_ATP"/>
    <property type="match status" value="1"/>
</dbReference>
<dbReference type="PROSITE" id="PS51986">
    <property type="entry name" value="GS_BETA_GRASP"/>
    <property type="match status" value="1"/>
</dbReference>
<dbReference type="PROSITE" id="PS51987">
    <property type="entry name" value="GS_CATALYTIC"/>
    <property type="match status" value="1"/>
</dbReference>
<accession>P25462</accession>
<sequence length="423" mass="46017">MAQAVVPAMQCRVGVKAAAGRVWSAGRTRTGRGGASPGFKVMAVSTGSTGVVPRLEQLLNMDTTPYTDKVIAEYIWVGGSGIDIRSKSRTISKPVEDPSELPKWNYDGSSTGQAPGEDSEVILYPQAIFKDPFRGGNNVLVICDTYTPQGEPLPTNKRHRAAQIFSDPKVGEQVPWFGIEQEYTLLQKDVNWPLGWPVGGFPGPQGPYYCAVGADKSFGRDISDAHYKACLYAGINISGTNGEVMPGQWEYQVGPSVGIEAGDHIWISRYILERITEQAGVVLTLDPKPIQGDWNGAGCHTNYSTKTMREDGGFEEIKRAILNLSLRHDLHISAYGEGNERRLTGKHETASIGTFSWGVANRGCSIRVGRDTEAKGKGYLEDRRPASNMDPYIVTGLLAETTILWQPSLEAEALAAKKLALKV</sequence>
<gene>
    <name type="primary">GLN2</name>
</gene>
<keyword id="KW-0067">ATP-binding</keyword>
<keyword id="KW-0150">Chloroplast</keyword>
<keyword id="KW-0436">Ligase</keyword>
<keyword id="KW-0547">Nucleotide-binding</keyword>
<keyword id="KW-0934">Plastid</keyword>
<keyword id="KW-1185">Reference proteome</keyword>
<keyword id="KW-0809">Transit peptide</keyword>
<comment type="function">
    <text>The light-modulated chloroplast enzyme, encoded by a nuclear gene and expressed primarily in leaves, is responsible for the reassimilation of the ammonia generated by photorespiration.</text>
</comment>
<comment type="catalytic activity">
    <reaction>
        <text>L-glutamate + NH4(+) + ATP = L-glutamine + ADP + phosphate + H(+)</text>
        <dbReference type="Rhea" id="RHEA:16169"/>
        <dbReference type="ChEBI" id="CHEBI:15378"/>
        <dbReference type="ChEBI" id="CHEBI:28938"/>
        <dbReference type="ChEBI" id="CHEBI:29985"/>
        <dbReference type="ChEBI" id="CHEBI:30616"/>
        <dbReference type="ChEBI" id="CHEBI:43474"/>
        <dbReference type="ChEBI" id="CHEBI:58359"/>
        <dbReference type="ChEBI" id="CHEBI:456216"/>
        <dbReference type="EC" id="6.3.1.2"/>
    </reaction>
</comment>
<comment type="subunit">
    <text>Homooctamer.</text>
</comment>
<comment type="subcellular location">
    <subcellularLocation>
        <location>Plastid</location>
        <location>Chloroplast</location>
    </subcellularLocation>
</comment>
<comment type="similarity">
    <text evidence="5">Belongs to the glutamine synthetase family.</text>
</comment>
<name>GLNAC_MAIZE</name>
<evidence type="ECO:0000255" key="1"/>
<evidence type="ECO:0000255" key="2">
    <source>
        <dbReference type="PROSITE-ProRule" id="PRU01330"/>
    </source>
</evidence>
<evidence type="ECO:0000255" key="3">
    <source>
        <dbReference type="PROSITE-ProRule" id="PRU01331"/>
    </source>
</evidence>
<evidence type="ECO:0000256" key="4">
    <source>
        <dbReference type="SAM" id="MobiDB-lite"/>
    </source>
</evidence>
<evidence type="ECO:0000305" key="5"/>